<evidence type="ECO:0000255" key="1">
    <source>
        <dbReference type="HAMAP-Rule" id="MF_00379"/>
    </source>
</evidence>
<accession>A6TG09</accession>
<keyword id="KW-0963">Cytoplasm</keyword>
<keyword id="KW-0342">GTP-binding</keyword>
<keyword id="KW-0378">Hydrolase</keyword>
<keyword id="KW-0460">Magnesium</keyword>
<keyword id="KW-0479">Metal-binding</keyword>
<keyword id="KW-0547">Nucleotide-binding</keyword>
<keyword id="KW-0630">Potassium</keyword>
<keyword id="KW-0819">tRNA processing</keyword>
<organism>
    <name type="scientific">Klebsiella pneumoniae subsp. pneumoniae (strain ATCC 700721 / MGH 78578)</name>
    <dbReference type="NCBI Taxonomy" id="272620"/>
    <lineage>
        <taxon>Bacteria</taxon>
        <taxon>Pseudomonadati</taxon>
        <taxon>Pseudomonadota</taxon>
        <taxon>Gammaproteobacteria</taxon>
        <taxon>Enterobacterales</taxon>
        <taxon>Enterobacteriaceae</taxon>
        <taxon>Klebsiella/Raoultella group</taxon>
        <taxon>Klebsiella</taxon>
        <taxon>Klebsiella pneumoniae complex</taxon>
    </lineage>
</organism>
<protein>
    <recommendedName>
        <fullName evidence="1">tRNA modification GTPase MnmE</fullName>
        <ecNumber evidence="1">3.6.-.-</ecNumber>
    </recommendedName>
</protein>
<feature type="chain" id="PRO_1000048836" description="tRNA modification GTPase MnmE">
    <location>
        <begin position="1"/>
        <end position="454"/>
    </location>
</feature>
<feature type="domain" description="TrmE-type G">
    <location>
        <begin position="216"/>
        <end position="377"/>
    </location>
</feature>
<feature type="binding site" evidence="1">
    <location>
        <position position="23"/>
    </location>
    <ligand>
        <name>(6S)-5-formyl-5,6,7,8-tetrahydrofolate</name>
        <dbReference type="ChEBI" id="CHEBI:57457"/>
    </ligand>
</feature>
<feature type="binding site" evidence="1">
    <location>
        <position position="80"/>
    </location>
    <ligand>
        <name>(6S)-5-formyl-5,6,7,8-tetrahydrofolate</name>
        <dbReference type="ChEBI" id="CHEBI:57457"/>
    </ligand>
</feature>
<feature type="binding site" evidence="1">
    <location>
        <position position="120"/>
    </location>
    <ligand>
        <name>(6S)-5-formyl-5,6,7,8-tetrahydrofolate</name>
        <dbReference type="ChEBI" id="CHEBI:57457"/>
    </ligand>
</feature>
<feature type="binding site" evidence="1">
    <location>
        <begin position="226"/>
        <end position="231"/>
    </location>
    <ligand>
        <name>GTP</name>
        <dbReference type="ChEBI" id="CHEBI:37565"/>
    </ligand>
</feature>
<feature type="binding site" evidence="1">
    <location>
        <position position="226"/>
    </location>
    <ligand>
        <name>K(+)</name>
        <dbReference type="ChEBI" id="CHEBI:29103"/>
    </ligand>
</feature>
<feature type="binding site" evidence="1">
    <location>
        <position position="230"/>
    </location>
    <ligand>
        <name>Mg(2+)</name>
        <dbReference type="ChEBI" id="CHEBI:18420"/>
    </ligand>
</feature>
<feature type="binding site" evidence="1">
    <location>
        <begin position="245"/>
        <end position="251"/>
    </location>
    <ligand>
        <name>GTP</name>
        <dbReference type="ChEBI" id="CHEBI:37565"/>
    </ligand>
</feature>
<feature type="binding site" evidence="1">
    <location>
        <position position="245"/>
    </location>
    <ligand>
        <name>K(+)</name>
        <dbReference type="ChEBI" id="CHEBI:29103"/>
    </ligand>
</feature>
<feature type="binding site" evidence="1">
    <location>
        <position position="247"/>
    </location>
    <ligand>
        <name>K(+)</name>
        <dbReference type="ChEBI" id="CHEBI:29103"/>
    </ligand>
</feature>
<feature type="binding site" evidence="1">
    <location>
        <position position="250"/>
    </location>
    <ligand>
        <name>K(+)</name>
        <dbReference type="ChEBI" id="CHEBI:29103"/>
    </ligand>
</feature>
<feature type="binding site" evidence="1">
    <location>
        <position position="251"/>
    </location>
    <ligand>
        <name>Mg(2+)</name>
        <dbReference type="ChEBI" id="CHEBI:18420"/>
    </ligand>
</feature>
<feature type="binding site" evidence="1">
    <location>
        <begin position="270"/>
        <end position="273"/>
    </location>
    <ligand>
        <name>GTP</name>
        <dbReference type="ChEBI" id="CHEBI:37565"/>
    </ligand>
</feature>
<feature type="binding site" evidence="1">
    <location>
        <begin position="335"/>
        <end position="338"/>
    </location>
    <ligand>
        <name>GTP</name>
        <dbReference type="ChEBI" id="CHEBI:37565"/>
    </ligand>
</feature>
<feature type="binding site" evidence="1">
    <location>
        <begin position="358"/>
        <end position="360"/>
    </location>
    <ligand>
        <name>GTP</name>
        <dbReference type="ChEBI" id="CHEBI:37565"/>
    </ligand>
</feature>
<feature type="binding site" evidence="1">
    <location>
        <position position="454"/>
    </location>
    <ligand>
        <name>(6S)-5-formyl-5,6,7,8-tetrahydrofolate</name>
        <dbReference type="ChEBI" id="CHEBI:57457"/>
    </ligand>
</feature>
<sequence>MSHNDTIVAQATPPGRGGVGILRISGLKARDVAQAVLGKLPKPRYADYLPFNDVDGTPLDQGIALWFPGPNSFTGEDVLELQGHGGPVILDLLLKRILTLPGLRIARPGEFSERAFLNDKLDLAQAEAIADLIDASSEQAARSALNSLQGAFSARVNHLVEALTHLRIYVEAAIDFPDEEIDFLSDGKIEAQLNEVMADLDAVRAEARQGSLLREGMKVVIAGRPNAGKSSLLNALAGREAAIVTDIAGTTRDVLREHIHIDGMPLHIIDTAGLRDANDEVERIGIERAWQEIAQADRVLFMVDGTTTSAVDPAEIWPDFIERLPAKLPITVVRNKADVTGEALGISEVNGHSLIRLSARTGDGVEVLRNHLKQSMGFDTNMEGGFLARRRHLQALEEAANHLQQGKAQLLGAWAGELLAEELRLAQQALSEITGEFTSDDLLGRIFSSFCIGK</sequence>
<comment type="function">
    <text evidence="1">Exhibits a very high intrinsic GTPase hydrolysis rate. Involved in the addition of a carboxymethylaminomethyl (cmnm) group at the wobble position (U34) of certain tRNAs, forming tRNA-cmnm(5)s(2)U34.</text>
</comment>
<comment type="cofactor">
    <cofactor evidence="1">
        <name>K(+)</name>
        <dbReference type="ChEBI" id="CHEBI:29103"/>
    </cofactor>
    <text evidence="1">Binds 1 potassium ion per subunit.</text>
</comment>
<comment type="subunit">
    <text evidence="1">Homodimer. Heterotetramer of two MnmE and two MnmG subunits.</text>
</comment>
<comment type="subcellular location">
    <subcellularLocation>
        <location evidence="1">Cytoplasm</location>
    </subcellularLocation>
</comment>
<comment type="similarity">
    <text evidence="1">Belongs to the TRAFAC class TrmE-Era-EngA-EngB-Septin-like GTPase superfamily. TrmE GTPase family.</text>
</comment>
<proteinExistence type="inferred from homology"/>
<gene>
    <name evidence="1" type="primary">mnmE</name>
    <name evidence="1" type="synonym">trmE</name>
    <name type="ordered locus">KPN78578_40690</name>
    <name type="ORF">KPN_04110</name>
</gene>
<name>MNME_KLEP7</name>
<dbReference type="EC" id="3.6.-.-" evidence="1"/>
<dbReference type="EMBL" id="CP000647">
    <property type="protein sequence ID" value="ABR79493.1"/>
    <property type="molecule type" value="Genomic_DNA"/>
</dbReference>
<dbReference type="RefSeq" id="WP_004186273.1">
    <property type="nucleotide sequence ID" value="NC_009648.1"/>
</dbReference>
<dbReference type="SMR" id="A6TG09"/>
<dbReference type="STRING" id="272620.KPN_04110"/>
<dbReference type="jPOST" id="A6TG09"/>
<dbReference type="PaxDb" id="272620-KPN_04110"/>
<dbReference type="EnsemblBacteria" id="ABR79493">
    <property type="protein sequence ID" value="ABR79493"/>
    <property type="gene ID" value="KPN_04110"/>
</dbReference>
<dbReference type="KEGG" id="kpn:KPN_04110"/>
<dbReference type="HOGENOM" id="CLU_019624_4_1_6"/>
<dbReference type="Proteomes" id="UP000000265">
    <property type="component" value="Chromosome"/>
</dbReference>
<dbReference type="GO" id="GO:0005829">
    <property type="term" value="C:cytosol"/>
    <property type="evidence" value="ECO:0007669"/>
    <property type="project" value="TreeGrafter"/>
</dbReference>
<dbReference type="GO" id="GO:0005525">
    <property type="term" value="F:GTP binding"/>
    <property type="evidence" value="ECO:0007669"/>
    <property type="project" value="UniProtKB-UniRule"/>
</dbReference>
<dbReference type="GO" id="GO:0003924">
    <property type="term" value="F:GTPase activity"/>
    <property type="evidence" value="ECO:0007669"/>
    <property type="project" value="UniProtKB-UniRule"/>
</dbReference>
<dbReference type="GO" id="GO:0046872">
    <property type="term" value="F:metal ion binding"/>
    <property type="evidence" value="ECO:0007669"/>
    <property type="project" value="UniProtKB-KW"/>
</dbReference>
<dbReference type="GO" id="GO:0030488">
    <property type="term" value="P:tRNA methylation"/>
    <property type="evidence" value="ECO:0007669"/>
    <property type="project" value="TreeGrafter"/>
</dbReference>
<dbReference type="GO" id="GO:0002098">
    <property type="term" value="P:tRNA wobble uridine modification"/>
    <property type="evidence" value="ECO:0007669"/>
    <property type="project" value="TreeGrafter"/>
</dbReference>
<dbReference type="CDD" id="cd04164">
    <property type="entry name" value="trmE"/>
    <property type="match status" value="1"/>
</dbReference>
<dbReference type="CDD" id="cd14858">
    <property type="entry name" value="TrmE_N"/>
    <property type="match status" value="1"/>
</dbReference>
<dbReference type="FunFam" id="3.30.1360.120:FF:000001">
    <property type="entry name" value="tRNA modification GTPase MnmE"/>
    <property type="match status" value="1"/>
</dbReference>
<dbReference type="FunFam" id="3.40.50.300:FF:000249">
    <property type="entry name" value="tRNA modification GTPase MnmE"/>
    <property type="match status" value="1"/>
</dbReference>
<dbReference type="Gene3D" id="3.40.50.300">
    <property type="entry name" value="P-loop containing nucleotide triphosphate hydrolases"/>
    <property type="match status" value="1"/>
</dbReference>
<dbReference type="Gene3D" id="3.30.1360.120">
    <property type="entry name" value="Probable tRNA modification gtpase trme, domain 1"/>
    <property type="match status" value="1"/>
</dbReference>
<dbReference type="Gene3D" id="1.20.120.430">
    <property type="entry name" value="tRNA modification GTPase MnmE domain 2"/>
    <property type="match status" value="1"/>
</dbReference>
<dbReference type="HAMAP" id="MF_00379">
    <property type="entry name" value="GTPase_MnmE"/>
    <property type="match status" value="1"/>
</dbReference>
<dbReference type="InterPro" id="IPR031168">
    <property type="entry name" value="G_TrmE"/>
</dbReference>
<dbReference type="InterPro" id="IPR006073">
    <property type="entry name" value="GTP-bd"/>
</dbReference>
<dbReference type="InterPro" id="IPR018948">
    <property type="entry name" value="GTP-bd_TrmE_N"/>
</dbReference>
<dbReference type="InterPro" id="IPR004520">
    <property type="entry name" value="GTPase_MnmE"/>
</dbReference>
<dbReference type="InterPro" id="IPR027368">
    <property type="entry name" value="MnmE_dom2"/>
</dbReference>
<dbReference type="InterPro" id="IPR025867">
    <property type="entry name" value="MnmE_helical"/>
</dbReference>
<dbReference type="InterPro" id="IPR027417">
    <property type="entry name" value="P-loop_NTPase"/>
</dbReference>
<dbReference type="InterPro" id="IPR005225">
    <property type="entry name" value="Small_GTP-bd"/>
</dbReference>
<dbReference type="InterPro" id="IPR027266">
    <property type="entry name" value="TrmE/GcvT_dom1"/>
</dbReference>
<dbReference type="NCBIfam" id="TIGR00450">
    <property type="entry name" value="mnmE_trmE_thdF"/>
    <property type="match status" value="1"/>
</dbReference>
<dbReference type="NCBIfam" id="NF003661">
    <property type="entry name" value="PRK05291.1-3"/>
    <property type="match status" value="1"/>
</dbReference>
<dbReference type="NCBIfam" id="TIGR00231">
    <property type="entry name" value="small_GTP"/>
    <property type="match status" value="1"/>
</dbReference>
<dbReference type="PANTHER" id="PTHR42714">
    <property type="entry name" value="TRNA MODIFICATION GTPASE GTPBP3"/>
    <property type="match status" value="1"/>
</dbReference>
<dbReference type="PANTHER" id="PTHR42714:SF2">
    <property type="entry name" value="TRNA MODIFICATION GTPASE GTPBP3, MITOCHONDRIAL"/>
    <property type="match status" value="1"/>
</dbReference>
<dbReference type="Pfam" id="PF01926">
    <property type="entry name" value="MMR_HSR1"/>
    <property type="match status" value="1"/>
</dbReference>
<dbReference type="Pfam" id="PF12631">
    <property type="entry name" value="MnmE_helical"/>
    <property type="match status" value="1"/>
</dbReference>
<dbReference type="Pfam" id="PF10396">
    <property type="entry name" value="TrmE_N"/>
    <property type="match status" value="1"/>
</dbReference>
<dbReference type="SUPFAM" id="SSF52540">
    <property type="entry name" value="P-loop containing nucleoside triphosphate hydrolases"/>
    <property type="match status" value="1"/>
</dbReference>
<dbReference type="SUPFAM" id="SSF116878">
    <property type="entry name" value="TrmE connector domain"/>
    <property type="match status" value="1"/>
</dbReference>
<dbReference type="PROSITE" id="PS51709">
    <property type="entry name" value="G_TRME"/>
    <property type="match status" value="1"/>
</dbReference>
<reference key="1">
    <citation type="submission" date="2006-09" db="EMBL/GenBank/DDBJ databases">
        <authorList>
            <consortium name="The Klebsiella pneumonia Genome Sequencing Project"/>
            <person name="McClelland M."/>
            <person name="Sanderson E.K."/>
            <person name="Spieth J."/>
            <person name="Clifton W.S."/>
            <person name="Latreille P."/>
            <person name="Sabo A."/>
            <person name="Pepin K."/>
            <person name="Bhonagiri V."/>
            <person name="Porwollik S."/>
            <person name="Ali J."/>
            <person name="Wilson R.K."/>
        </authorList>
    </citation>
    <scope>NUCLEOTIDE SEQUENCE [LARGE SCALE GENOMIC DNA]</scope>
    <source>
        <strain>ATCC 700721 / MGH 78578</strain>
    </source>
</reference>